<organism>
    <name type="scientific">Candida albicans</name>
    <name type="common">Yeast</name>
    <dbReference type="NCBI Taxonomy" id="5476"/>
    <lineage>
        <taxon>Eukaryota</taxon>
        <taxon>Fungi</taxon>
        <taxon>Dikarya</taxon>
        <taxon>Ascomycota</taxon>
        <taxon>Saccharomycotina</taxon>
        <taxon>Pichiomycetes</taxon>
        <taxon>Debaryomycetaceae</taxon>
        <taxon>Candida/Lodderomyces clade</taxon>
        <taxon>Candida</taxon>
    </lineage>
</organism>
<sequence length="407" mass="46074">MTIESTNSFVVPSDTKLIDVTPLGSTKLFQPIKVGNNVLPQRIAYVPTTRFRASKDHIPSDLQLNYYNARSQYPGTLIITEATFASERGGIDLHVPGIYNDAQAKSWKKINEAIHGNGSFSSVQLWYLGRVANAKDLKDSGLPLIAPSAVYWDENSEKLAKEAGNELRALTEEEIDHIVEVEYPNAAKHALEAGFDYVEIHGAHGYLLDQFLNLASNKRTDKYGCGSIENRARLLLRVVDKLIEVVGANRLALRLSPWASFQGMEIEGEEIHSYILQQLQQRADNGQQLAYISLVEPRVTGIYDVSLKDQQGRSNEFAYKIWKGNFIRAGNYTYDAPEFKTLINDLKNDRSIIGFSRFFTSNPDLVEKLKLGKPLNYYNREEFYKYYNYGYNSYDESEKQVIGKPLA</sequence>
<evidence type="ECO:0000250" key="1">
    <source>
        <dbReference type="UniProtKB" id="C5H429"/>
    </source>
</evidence>
<evidence type="ECO:0000250" key="2">
    <source>
        <dbReference type="UniProtKB" id="Q02899"/>
    </source>
</evidence>
<evidence type="ECO:0000269" key="3">
    <source>
    </source>
</evidence>
<evidence type="ECO:0000303" key="4">
    <source>
    </source>
</evidence>
<evidence type="ECO:0000305" key="5"/>
<reference key="1">
    <citation type="journal article" date="1994" name="Proc. Natl. Acad. Sci. U.S.A.">
        <title>Candida albicans estrogen-binding protein gene encodes an oxidoreductase that is inhibited by estradiol.</title>
        <authorList>
            <person name="Madani N.D."/>
            <person name="Malloy P.J."/>
            <person name="Rodriguez-Pombo P."/>
            <person name="Krishnan A.V."/>
            <person name="Feldman D."/>
        </authorList>
    </citation>
    <scope>NUCLEOTIDE SEQUENCE [GENOMIC DNA]</scope>
    <scope>PROTEIN SEQUENCE OF 2-10 AND 265-279</scope>
    <scope>FUNCTION</scope>
    <scope>CATALYTIC ACTIVITY</scope>
    <scope>DEVELOPMENTAL STAGE</scope>
    <source>
        <strain>158 / STN 1</strain>
    </source>
</reference>
<dbReference type="EC" id="1.6.99.1" evidence="3"/>
<dbReference type="EMBL" id="L25759">
    <property type="protein sequence ID" value="AAA18013.1"/>
    <property type="molecule type" value="Unassigned_RNA"/>
</dbReference>
<dbReference type="PIR" id="A36990">
    <property type="entry name" value="A36990"/>
</dbReference>
<dbReference type="SMR" id="P43084"/>
<dbReference type="VEuPathDB" id="FungiDB:C6_01180C_A"/>
<dbReference type="VEuPathDB" id="FungiDB:CAWG_05243"/>
<dbReference type="GO" id="GO:0099130">
    <property type="term" value="F:estrogen binding"/>
    <property type="evidence" value="ECO:0000314"/>
    <property type="project" value="UniProtKB"/>
</dbReference>
<dbReference type="GO" id="GO:0010181">
    <property type="term" value="F:FMN binding"/>
    <property type="evidence" value="ECO:0007669"/>
    <property type="project" value="InterPro"/>
</dbReference>
<dbReference type="GO" id="GO:0003959">
    <property type="term" value="F:NADPH dehydrogenase activity"/>
    <property type="evidence" value="ECO:0007669"/>
    <property type="project" value="UniProtKB-EC"/>
</dbReference>
<dbReference type="CDD" id="cd02933">
    <property type="entry name" value="OYE_like_FMN"/>
    <property type="match status" value="1"/>
</dbReference>
<dbReference type="FunFam" id="3.20.20.70:FF:000138">
    <property type="entry name" value="NADPH dehydrogenase 1"/>
    <property type="match status" value="1"/>
</dbReference>
<dbReference type="Gene3D" id="3.20.20.70">
    <property type="entry name" value="Aldolase class I"/>
    <property type="match status" value="1"/>
</dbReference>
<dbReference type="InterPro" id="IPR013785">
    <property type="entry name" value="Aldolase_TIM"/>
</dbReference>
<dbReference type="InterPro" id="IPR001155">
    <property type="entry name" value="OxRdtase_FMN_N"/>
</dbReference>
<dbReference type="InterPro" id="IPR045247">
    <property type="entry name" value="Oye-like"/>
</dbReference>
<dbReference type="PANTHER" id="PTHR22893">
    <property type="entry name" value="NADH OXIDOREDUCTASE-RELATED"/>
    <property type="match status" value="1"/>
</dbReference>
<dbReference type="PANTHER" id="PTHR22893:SF91">
    <property type="entry name" value="NADPH DEHYDROGENASE 2-RELATED"/>
    <property type="match status" value="1"/>
</dbReference>
<dbReference type="Pfam" id="PF00724">
    <property type="entry name" value="Oxidored_FMN"/>
    <property type="match status" value="1"/>
</dbReference>
<dbReference type="SUPFAM" id="SSF51395">
    <property type="entry name" value="FMN-linked oxidoreductases"/>
    <property type="match status" value="1"/>
</dbReference>
<protein>
    <recommendedName>
        <fullName>Probable NADPH dehydrogenase</fullName>
        <ecNumber evidence="3">1.6.99.1</ecNumber>
    </recommendedName>
    <alternativeName>
        <fullName evidence="4">Estrogen-binding protein</fullName>
        <shortName evidence="4">EBP</shortName>
    </alternativeName>
</protein>
<keyword id="KW-0903">Direct protein sequencing</keyword>
<keyword id="KW-0285">Flavoprotein</keyword>
<keyword id="KW-0288">FMN</keyword>
<keyword id="KW-0521">NADP</keyword>
<keyword id="KW-0560">Oxidoreductase</keyword>
<comment type="function">
    <text evidence="3">Oxidoreductase that binds mammalian estrogens with high affinity.</text>
</comment>
<comment type="catalytic activity">
    <reaction evidence="3">
        <text>A + NADPH + H(+) = AH2 + NADP(+)</text>
        <dbReference type="Rhea" id="RHEA:13149"/>
        <dbReference type="ChEBI" id="CHEBI:13193"/>
        <dbReference type="ChEBI" id="CHEBI:15378"/>
        <dbReference type="ChEBI" id="CHEBI:17499"/>
        <dbReference type="ChEBI" id="CHEBI:57783"/>
        <dbReference type="ChEBI" id="CHEBI:58349"/>
        <dbReference type="EC" id="1.6.99.1"/>
    </reaction>
</comment>
<comment type="cofactor">
    <cofactor evidence="2">
        <name>FMN</name>
        <dbReference type="ChEBI" id="CHEBI:58210"/>
    </cofactor>
</comment>
<comment type="developmental stage">
    <text evidence="3">The expression is high during the lag and early logarithmic phases of growth, and low at or near stationary phase.</text>
</comment>
<comment type="similarity">
    <text evidence="5">Belongs to the NADH:flavin oxidoreductase/NADH oxidase family.</text>
</comment>
<gene>
    <name evidence="4" type="primary">EBP1</name>
</gene>
<proteinExistence type="evidence at protein level"/>
<feature type="initiator methionine" description="Removed" evidence="3">
    <location>
        <position position="1"/>
    </location>
</feature>
<feature type="chain" id="PRO_0000194479" description="Probable NADPH dehydrogenase">
    <location>
        <begin position="2"/>
        <end position="407"/>
    </location>
</feature>
<feature type="active site" description="Proton donor" evidence="2">
    <location>
        <position position="206"/>
    </location>
</feature>
<feature type="binding site" evidence="2">
    <location>
        <position position="49"/>
    </location>
    <ligand>
        <name>FMN</name>
        <dbReference type="ChEBI" id="CHEBI:58210"/>
    </ligand>
</feature>
<feature type="binding site" evidence="2">
    <location>
        <position position="124"/>
    </location>
    <ligand>
        <name>FMN</name>
        <dbReference type="ChEBI" id="CHEBI:58210"/>
    </ligand>
</feature>
<feature type="binding site" evidence="1">
    <location>
        <begin position="201"/>
        <end position="204"/>
    </location>
    <ligand>
        <name>substrate</name>
    </ligand>
</feature>
<feature type="binding site" evidence="2">
    <location>
        <position position="254"/>
    </location>
    <ligand>
        <name>FMN</name>
        <dbReference type="ChEBI" id="CHEBI:58210"/>
    </ligand>
</feature>
<feature type="binding site" evidence="2">
    <location>
        <position position="357"/>
    </location>
    <ligand>
        <name>FMN</name>
        <dbReference type="ChEBI" id="CHEBI:58210"/>
    </ligand>
</feature>
<feature type="site" description="May interact with the steroid">
    <location>
        <position position="225"/>
    </location>
</feature>
<accession>P43084</accession>
<name>EBP1_CANAX</name>